<evidence type="ECO:0000250" key="1"/>
<evidence type="ECO:0000250" key="2">
    <source>
        <dbReference type="UniProtKB" id="Q9UIA9"/>
    </source>
</evidence>
<evidence type="ECO:0000269" key="3">
    <source>
    </source>
</evidence>
<evidence type="ECO:0000303" key="4">
    <source ref="3"/>
</evidence>
<evidence type="ECO:0000305" key="5"/>
<feature type="initiator methionine" description="Removed" evidence="2">
    <location>
        <position position="1"/>
    </location>
</feature>
<feature type="chain" id="PRO_0000204718" description="Ran-binding protein 17">
    <location>
        <begin position="2"/>
        <end position="1088"/>
    </location>
</feature>
<feature type="modified residue" description="N-acetylalanine" evidence="2">
    <location>
        <position position="2"/>
    </location>
</feature>
<feature type="modified residue" description="Phosphoserine" evidence="2">
    <location>
        <position position="569"/>
    </location>
</feature>
<feature type="splice variant" id="VSP_056669" description="In isoform 2." evidence="4">
    <original>VYARMS</original>
    <variation>KTDIFL</variation>
    <location>
        <begin position="571"/>
        <end position="576"/>
    </location>
</feature>
<feature type="splice variant" id="VSP_056670" description="In isoform 2." evidence="4">
    <location>
        <begin position="577"/>
        <end position="1088"/>
    </location>
</feature>
<feature type="sequence conflict" description="In Ref. 6; BAB55427." evidence="5" ref="6">
    <original>L</original>
    <variation>H</variation>
    <location>
        <position position="107"/>
    </location>
</feature>
<feature type="sequence conflict" description="In Ref. 6; BAB55427." evidence="5" ref="6">
    <original>V</original>
    <variation>A</variation>
    <location>
        <position position="199"/>
    </location>
</feature>
<dbReference type="EMBL" id="AF222747">
    <property type="protein sequence ID" value="AAG44255.1"/>
    <property type="molecule type" value="mRNA"/>
</dbReference>
<dbReference type="EMBL" id="AJ288952">
    <property type="protein sequence ID" value="CAC81806.1"/>
    <property type="molecule type" value="mRNA"/>
</dbReference>
<dbReference type="EMBL" id="AJ288953">
    <property type="protein sequence ID" value="CAC81807.1"/>
    <property type="molecule type" value="mRNA"/>
</dbReference>
<dbReference type="EMBL" id="AJ288955">
    <property type="protein sequence ID" value="CAC81809.1"/>
    <property type="molecule type" value="mRNA"/>
</dbReference>
<dbReference type="EMBL" id="AC008514">
    <property type="status" value="NOT_ANNOTATED_CDS"/>
    <property type="molecule type" value="Genomic_DNA"/>
</dbReference>
<dbReference type="EMBL" id="AC010306">
    <property type="status" value="NOT_ANNOTATED_CDS"/>
    <property type="molecule type" value="Genomic_DNA"/>
</dbReference>
<dbReference type="EMBL" id="AC016574">
    <property type="status" value="NOT_ANNOTATED_CDS"/>
    <property type="molecule type" value="Genomic_DNA"/>
</dbReference>
<dbReference type="EMBL" id="AC018753">
    <property type="status" value="NOT_ANNOTATED_CDS"/>
    <property type="molecule type" value="Genomic_DNA"/>
</dbReference>
<dbReference type="EMBL" id="AC021077">
    <property type="status" value="NOT_ANNOTATED_CDS"/>
    <property type="molecule type" value="Genomic_DNA"/>
</dbReference>
<dbReference type="EMBL" id="AC091980">
    <property type="status" value="NOT_ANNOTATED_CDS"/>
    <property type="molecule type" value="Genomic_DNA"/>
</dbReference>
<dbReference type="EMBL" id="CH471062">
    <property type="protein sequence ID" value="EAW61456.1"/>
    <property type="molecule type" value="Genomic_DNA"/>
</dbReference>
<dbReference type="EMBL" id="CH471062">
    <property type="protein sequence ID" value="EAW61457.1"/>
    <property type="molecule type" value="Genomic_DNA"/>
</dbReference>
<dbReference type="EMBL" id="CH471062">
    <property type="protein sequence ID" value="EAW61461.1"/>
    <property type="molecule type" value="Genomic_DNA"/>
</dbReference>
<dbReference type="EMBL" id="CH471062">
    <property type="protein sequence ID" value="EAW61463.1"/>
    <property type="molecule type" value="Genomic_DNA"/>
</dbReference>
<dbReference type="EMBL" id="AK027880">
    <property type="protein sequence ID" value="BAB55427.1"/>
    <property type="status" value="ALT_INIT"/>
    <property type="molecule type" value="mRNA"/>
</dbReference>
<dbReference type="CCDS" id="CCDS34287.1">
    <molecule id="Q9H2T7-1"/>
</dbReference>
<dbReference type="RefSeq" id="NP_075048.1">
    <molecule id="Q9H2T7-1"/>
    <property type="nucleotide sequence ID" value="NM_022897.5"/>
</dbReference>
<dbReference type="SMR" id="Q9H2T7"/>
<dbReference type="BioGRID" id="122341">
    <property type="interactions" value="19"/>
</dbReference>
<dbReference type="FunCoup" id="Q9H2T7">
    <property type="interactions" value="1659"/>
</dbReference>
<dbReference type="IntAct" id="Q9H2T7">
    <property type="interactions" value="9"/>
</dbReference>
<dbReference type="STRING" id="9606.ENSP00000427975"/>
<dbReference type="TCDB" id="1.I.1.1.3">
    <property type="family name" value="the nuclear pore complex (npc) family"/>
</dbReference>
<dbReference type="GlyGen" id="Q9H2T7">
    <property type="glycosylation" value="1 site, 1 O-linked glycan (1 site)"/>
</dbReference>
<dbReference type="iPTMnet" id="Q9H2T7"/>
<dbReference type="PhosphoSitePlus" id="Q9H2T7"/>
<dbReference type="BioMuta" id="RANBP17"/>
<dbReference type="DMDM" id="17368945"/>
<dbReference type="jPOST" id="Q9H2T7"/>
<dbReference type="MassIVE" id="Q9H2T7"/>
<dbReference type="PaxDb" id="9606-ENSP00000427975"/>
<dbReference type="PeptideAtlas" id="Q9H2T7"/>
<dbReference type="ProteomicsDB" id="70515"/>
<dbReference type="ProteomicsDB" id="80590">
    <molecule id="Q9H2T7-1"/>
</dbReference>
<dbReference type="Pumba" id="Q9H2T7"/>
<dbReference type="Antibodypedia" id="28854">
    <property type="antibodies" value="124 antibodies from 24 providers"/>
</dbReference>
<dbReference type="DNASU" id="64901"/>
<dbReference type="Ensembl" id="ENST00000389118.8">
    <molecule id="Q9H2T7-2"/>
    <property type="protein sequence ID" value="ENSP00000373770.4"/>
    <property type="gene ID" value="ENSG00000204764.14"/>
</dbReference>
<dbReference type="Ensembl" id="ENST00000519256.5">
    <molecule id="Q9H2T7-2"/>
    <property type="protein sequence ID" value="ENSP00000429298.1"/>
    <property type="gene ID" value="ENSG00000204764.14"/>
</dbReference>
<dbReference type="Ensembl" id="ENST00000519949.5">
    <molecule id="Q9H2T7-2"/>
    <property type="protein sequence ID" value="ENSP00000430444.1"/>
    <property type="gene ID" value="ENSG00000204764.14"/>
</dbReference>
<dbReference type="Ensembl" id="ENST00000522533.5">
    <molecule id="Q9H2T7-2"/>
    <property type="protein sequence ID" value="ENSP00000430599.1"/>
    <property type="gene ID" value="ENSG00000204764.14"/>
</dbReference>
<dbReference type="Ensembl" id="ENST00000523189.6">
    <molecule id="Q9H2T7-1"/>
    <property type="protein sequence ID" value="ENSP00000427975.1"/>
    <property type="gene ID" value="ENSG00000204764.14"/>
</dbReference>
<dbReference type="GeneID" id="64901"/>
<dbReference type="KEGG" id="hsa:64901"/>
<dbReference type="MANE-Select" id="ENST00000523189.6">
    <property type="protein sequence ID" value="ENSP00000427975.1"/>
    <property type="RefSeq nucleotide sequence ID" value="NM_022897.5"/>
    <property type="RefSeq protein sequence ID" value="NP_075048.1"/>
</dbReference>
<dbReference type="UCSC" id="uc003mba.4">
    <molecule id="Q9H2T7-1"/>
    <property type="organism name" value="human"/>
</dbReference>
<dbReference type="AGR" id="HGNC:14428"/>
<dbReference type="CTD" id="64901"/>
<dbReference type="DisGeNET" id="64901"/>
<dbReference type="GeneCards" id="RANBP17"/>
<dbReference type="HGNC" id="HGNC:14428">
    <property type="gene designation" value="RANBP17"/>
</dbReference>
<dbReference type="HPA" id="ENSG00000204764">
    <property type="expression patterns" value="Low tissue specificity"/>
</dbReference>
<dbReference type="MIM" id="606141">
    <property type="type" value="gene"/>
</dbReference>
<dbReference type="neXtProt" id="NX_Q9H2T7"/>
<dbReference type="OpenTargets" id="ENSG00000204764"/>
<dbReference type="PharmGKB" id="PA34208"/>
<dbReference type="VEuPathDB" id="HostDB:ENSG00000204764"/>
<dbReference type="eggNOG" id="KOG1410">
    <property type="taxonomic scope" value="Eukaryota"/>
</dbReference>
<dbReference type="GeneTree" id="ENSGT00940000153139"/>
<dbReference type="HOGENOM" id="CLU_005409_0_0_1"/>
<dbReference type="InParanoid" id="Q9H2T7"/>
<dbReference type="OMA" id="DGNTEPC"/>
<dbReference type="OrthoDB" id="244158at2759"/>
<dbReference type="PAN-GO" id="Q9H2T7">
    <property type="GO annotations" value="4 GO annotations based on evolutionary models"/>
</dbReference>
<dbReference type="PhylomeDB" id="Q9H2T7"/>
<dbReference type="TreeFam" id="TF314248"/>
<dbReference type="PathwayCommons" id="Q9H2T7"/>
<dbReference type="SignaLink" id="Q9H2T7"/>
<dbReference type="SIGNOR" id="Q9H2T7"/>
<dbReference type="BioGRID-ORCS" id="64901">
    <property type="hits" value="8 hits in 1145 CRISPR screens"/>
</dbReference>
<dbReference type="ChiTaRS" id="RANBP17">
    <property type="organism name" value="human"/>
</dbReference>
<dbReference type="GenomeRNAi" id="64901"/>
<dbReference type="Pharos" id="Q9H2T7">
    <property type="development level" value="Tbio"/>
</dbReference>
<dbReference type="PRO" id="PR:Q9H2T7"/>
<dbReference type="Proteomes" id="UP000005640">
    <property type="component" value="Chromosome 5"/>
</dbReference>
<dbReference type="RNAct" id="Q9H2T7">
    <property type="molecule type" value="protein"/>
</dbReference>
<dbReference type="Bgee" id="ENSG00000204764">
    <property type="expression patterns" value="Expressed in calcaneal tendon and 121 other cell types or tissues"/>
</dbReference>
<dbReference type="ExpressionAtlas" id="Q9H2T7">
    <property type="expression patterns" value="baseline and differential"/>
</dbReference>
<dbReference type="GO" id="GO:0005737">
    <property type="term" value="C:cytoplasm"/>
    <property type="evidence" value="ECO:0000318"/>
    <property type="project" value="GO_Central"/>
</dbReference>
<dbReference type="GO" id="GO:0005643">
    <property type="term" value="C:nuclear pore"/>
    <property type="evidence" value="ECO:0000318"/>
    <property type="project" value="GO_Central"/>
</dbReference>
<dbReference type="GO" id="GO:0005525">
    <property type="term" value="F:GTP binding"/>
    <property type="evidence" value="ECO:0000303"/>
    <property type="project" value="UniProtKB"/>
</dbReference>
<dbReference type="GO" id="GO:0005049">
    <property type="term" value="F:nuclear export signal receptor activity"/>
    <property type="evidence" value="ECO:0000318"/>
    <property type="project" value="GO_Central"/>
</dbReference>
<dbReference type="GO" id="GO:0031267">
    <property type="term" value="F:small GTPase binding"/>
    <property type="evidence" value="ECO:0007669"/>
    <property type="project" value="InterPro"/>
</dbReference>
<dbReference type="GO" id="GO:0051028">
    <property type="term" value="P:mRNA transport"/>
    <property type="evidence" value="ECO:0007669"/>
    <property type="project" value="UniProtKB-KW"/>
</dbReference>
<dbReference type="GO" id="GO:0006611">
    <property type="term" value="P:protein export from nucleus"/>
    <property type="evidence" value="ECO:0000318"/>
    <property type="project" value="GO_Central"/>
</dbReference>
<dbReference type="GO" id="GO:0006606">
    <property type="term" value="P:protein import into nucleus"/>
    <property type="evidence" value="ECO:0000303"/>
    <property type="project" value="UniProtKB"/>
</dbReference>
<dbReference type="FunFam" id="1.25.10.10:FF:000042">
    <property type="entry name" value="exportin-7 isoform X1"/>
    <property type="match status" value="1"/>
</dbReference>
<dbReference type="FunFam" id="1.25.10.10:FF:000059">
    <property type="entry name" value="exportin-7 isoform X2"/>
    <property type="match status" value="1"/>
</dbReference>
<dbReference type="Gene3D" id="1.25.10.10">
    <property type="entry name" value="Leucine-rich Repeat Variant"/>
    <property type="match status" value="2"/>
</dbReference>
<dbReference type="InterPro" id="IPR011989">
    <property type="entry name" value="ARM-like"/>
</dbReference>
<dbReference type="InterPro" id="IPR016024">
    <property type="entry name" value="ARM-type_fold"/>
</dbReference>
<dbReference type="InterPro" id="IPR001494">
    <property type="entry name" value="Importin-beta_N"/>
</dbReference>
<dbReference type="InterPro" id="IPR044189">
    <property type="entry name" value="XPO4/7-like"/>
</dbReference>
<dbReference type="PANTHER" id="PTHR12596">
    <property type="entry name" value="EXPORTIN 4,7-RELATED"/>
    <property type="match status" value="1"/>
</dbReference>
<dbReference type="PANTHER" id="PTHR12596:SF8">
    <property type="entry name" value="RAN-BINDING PROTEIN 17"/>
    <property type="match status" value="1"/>
</dbReference>
<dbReference type="Pfam" id="PF03810">
    <property type="entry name" value="IBN_N"/>
    <property type="match status" value="1"/>
</dbReference>
<dbReference type="SMART" id="SM00913">
    <property type="entry name" value="IBN_N"/>
    <property type="match status" value="1"/>
</dbReference>
<dbReference type="SUPFAM" id="SSF48371">
    <property type="entry name" value="ARM repeat"/>
    <property type="match status" value="1"/>
</dbReference>
<protein>
    <recommendedName>
        <fullName>Ran-binding protein 17</fullName>
    </recommendedName>
</protein>
<gene>
    <name type="primary">RANBP17</name>
</gene>
<proteinExistence type="evidence at protein level"/>
<name>RBP17_HUMAN</name>
<reference key="1">
    <citation type="journal article" date="2000" name="Biochem. Biophys. Res. Commun.">
        <title>Identification of a novel putative Ran-binding protein and its close homologue.</title>
        <authorList>
            <person name="Koch P."/>
            <person name="Bohlmann I."/>
            <person name="Schaefer M."/>
            <person name="Hansen-Hagge T.E."/>
            <person name="Kiyoi H."/>
            <person name="Wilda M."/>
            <person name="Hameister H."/>
            <person name="Bartram C.R."/>
            <person name="Janssen J.W.G."/>
        </authorList>
    </citation>
    <scope>NUCLEOTIDE SEQUENCE [MRNA] (ISOFORM 1)</scope>
    <scope>TISSUE SPECIFICITY</scope>
    <source>
        <tissue>Testis</tissue>
    </source>
</reference>
<reference key="2">
    <citation type="journal article" date="2000" name="J. Biol. Chem.">
        <title>Identification of two novel RanGTP-binding proteins belonging to the importin beta superfamily.</title>
        <authorList>
            <person name="Kutay U."/>
            <person name="Hartmann E."/>
            <person name="Treichel N."/>
            <person name="Calado A."/>
            <person name="Carmo-Fonseca M."/>
            <person name="Prehn S."/>
            <person name="Kraft R."/>
            <person name="Goerlich D."/>
            <person name="Bischoff F.R."/>
        </authorList>
    </citation>
    <scope>NUCLEOTIDE SEQUENCE [MRNA] (ISOFORM 1)</scope>
    <source>
        <tissue>Cervix carcinoma</tissue>
    </source>
</reference>
<reference key="3">
    <citation type="submission" date="2000-04" db="EMBL/GenBank/DDBJ databases">
        <title>Identification of a gene located at the chromosomal breakpoint t(5;14)(q33-q34;q11), a recurring chromosomal aberration in a subset of human acute leukemias.</title>
        <authorList>
            <person name="Hansen-Hagge T.E."/>
            <person name="Schaefer M."/>
            <person name="Kiyoi H."/>
            <person name="Bohlmann I."/>
            <person name="Koch P."/>
            <person name="Morris S."/>
            <person name="Bartram C.R."/>
            <person name="Janssen J.W."/>
        </authorList>
    </citation>
    <scope>NUCLEOTIDE SEQUENCE [MRNA] (ISOFORM 2)</scope>
    <source>
        <tissue>Testis</tissue>
    </source>
</reference>
<reference key="4">
    <citation type="journal article" date="2004" name="Nature">
        <title>The DNA sequence and comparative analysis of human chromosome 5.</title>
        <authorList>
            <person name="Schmutz J."/>
            <person name="Martin J."/>
            <person name="Terry A."/>
            <person name="Couronne O."/>
            <person name="Grimwood J."/>
            <person name="Lowry S."/>
            <person name="Gordon L.A."/>
            <person name="Scott D."/>
            <person name="Xie G."/>
            <person name="Huang W."/>
            <person name="Hellsten U."/>
            <person name="Tran-Gyamfi M."/>
            <person name="She X."/>
            <person name="Prabhakar S."/>
            <person name="Aerts A."/>
            <person name="Altherr M."/>
            <person name="Bajorek E."/>
            <person name="Black S."/>
            <person name="Branscomb E."/>
            <person name="Caoile C."/>
            <person name="Challacombe J.F."/>
            <person name="Chan Y.M."/>
            <person name="Denys M."/>
            <person name="Detter J.C."/>
            <person name="Escobar J."/>
            <person name="Flowers D."/>
            <person name="Fotopulos D."/>
            <person name="Glavina T."/>
            <person name="Gomez M."/>
            <person name="Gonzales E."/>
            <person name="Goodstein D."/>
            <person name="Grigoriev I."/>
            <person name="Groza M."/>
            <person name="Hammon N."/>
            <person name="Hawkins T."/>
            <person name="Haydu L."/>
            <person name="Israni S."/>
            <person name="Jett J."/>
            <person name="Kadner K."/>
            <person name="Kimball H."/>
            <person name="Kobayashi A."/>
            <person name="Lopez F."/>
            <person name="Lou Y."/>
            <person name="Martinez D."/>
            <person name="Medina C."/>
            <person name="Morgan J."/>
            <person name="Nandkeshwar R."/>
            <person name="Noonan J.P."/>
            <person name="Pitluck S."/>
            <person name="Pollard M."/>
            <person name="Predki P."/>
            <person name="Priest J."/>
            <person name="Ramirez L."/>
            <person name="Retterer J."/>
            <person name="Rodriguez A."/>
            <person name="Rogers S."/>
            <person name="Salamov A."/>
            <person name="Salazar A."/>
            <person name="Thayer N."/>
            <person name="Tice H."/>
            <person name="Tsai M."/>
            <person name="Ustaszewska A."/>
            <person name="Vo N."/>
            <person name="Wheeler J."/>
            <person name="Wu K."/>
            <person name="Yang J."/>
            <person name="Dickson M."/>
            <person name="Cheng J.-F."/>
            <person name="Eichler E.E."/>
            <person name="Olsen A."/>
            <person name="Pennacchio L.A."/>
            <person name="Rokhsar D.S."/>
            <person name="Richardson P."/>
            <person name="Lucas S.M."/>
            <person name="Myers R.M."/>
            <person name="Rubin E.M."/>
        </authorList>
    </citation>
    <scope>NUCLEOTIDE SEQUENCE [LARGE SCALE GENOMIC DNA]</scope>
</reference>
<reference key="5">
    <citation type="submission" date="2005-09" db="EMBL/GenBank/DDBJ databases">
        <authorList>
            <person name="Mural R.J."/>
            <person name="Istrail S."/>
            <person name="Sutton G."/>
            <person name="Florea L."/>
            <person name="Halpern A.L."/>
            <person name="Mobarry C.M."/>
            <person name="Lippert R."/>
            <person name="Walenz B."/>
            <person name="Shatkay H."/>
            <person name="Dew I."/>
            <person name="Miller J.R."/>
            <person name="Flanigan M.J."/>
            <person name="Edwards N.J."/>
            <person name="Bolanos R."/>
            <person name="Fasulo D."/>
            <person name="Halldorsson B.V."/>
            <person name="Hannenhalli S."/>
            <person name="Turner R."/>
            <person name="Yooseph S."/>
            <person name="Lu F."/>
            <person name="Nusskern D.R."/>
            <person name="Shue B.C."/>
            <person name="Zheng X.H."/>
            <person name="Zhong F."/>
            <person name="Delcher A.L."/>
            <person name="Huson D.H."/>
            <person name="Kravitz S.A."/>
            <person name="Mouchard L."/>
            <person name="Reinert K."/>
            <person name="Remington K.A."/>
            <person name="Clark A.G."/>
            <person name="Waterman M.S."/>
            <person name="Eichler E.E."/>
            <person name="Adams M.D."/>
            <person name="Hunkapiller M.W."/>
            <person name="Myers E.W."/>
            <person name="Venter J.C."/>
        </authorList>
    </citation>
    <scope>NUCLEOTIDE SEQUENCE [LARGE SCALE GENOMIC DNA]</scope>
</reference>
<reference key="6">
    <citation type="journal article" date="2004" name="Nat. Genet.">
        <title>Complete sequencing and characterization of 21,243 full-length human cDNAs.</title>
        <authorList>
            <person name="Ota T."/>
            <person name="Suzuki Y."/>
            <person name="Nishikawa T."/>
            <person name="Otsuki T."/>
            <person name="Sugiyama T."/>
            <person name="Irie R."/>
            <person name="Wakamatsu A."/>
            <person name="Hayashi K."/>
            <person name="Sato H."/>
            <person name="Nagai K."/>
            <person name="Kimura K."/>
            <person name="Makita H."/>
            <person name="Sekine M."/>
            <person name="Obayashi M."/>
            <person name="Nishi T."/>
            <person name="Shibahara T."/>
            <person name="Tanaka T."/>
            <person name="Ishii S."/>
            <person name="Yamamoto J."/>
            <person name="Saito K."/>
            <person name="Kawai Y."/>
            <person name="Isono Y."/>
            <person name="Nakamura Y."/>
            <person name="Nagahari K."/>
            <person name="Murakami K."/>
            <person name="Yasuda T."/>
            <person name="Iwayanagi T."/>
            <person name="Wagatsuma M."/>
            <person name="Shiratori A."/>
            <person name="Sudo H."/>
            <person name="Hosoiri T."/>
            <person name="Kaku Y."/>
            <person name="Kodaira H."/>
            <person name="Kondo H."/>
            <person name="Sugawara M."/>
            <person name="Takahashi M."/>
            <person name="Kanda K."/>
            <person name="Yokoi T."/>
            <person name="Furuya T."/>
            <person name="Kikkawa E."/>
            <person name="Omura Y."/>
            <person name="Abe K."/>
            <person name="Kamihara K."/>
            <person name="Katsuta N."/>
            <person name="Sato K."/>
            <person name="Tanikawa M."/>
            <person name="Yamazaki M."/>
            <person name="Ninomiya K."/>
            <person name="Ishibashi T."/>
            <person name="Yamashita H."/>
            <person name="Murakawa K."/>
            <person name="Fujimori K."/>
            <person name="Tanai H."/>
            <person name="Kimata M."/>
            <person name="Watanabe M."/>
            <person name="Hiraoka S."/>
            <person name="Chiba Y."/>
            <person name="Ishida S."/>
            <person name="Ono Y."/>
            <person name="Takiguchi S."/>
            <person name="Watanabe S."/>
            <person name="Yosida M."/>
            <person name="Hotuta T."/>
            <person name="Kusano J."/>
            <person name="Kanehori K."/>
            <person name="Takahashi-Fujii A."/>
            <person name="Hara H."/>
            <person name="Tanase T.-O."/>
            <person name="Nomura Y."/>
            <person name="Togiya S."/>
            <person name="Komai F."/>
            <person name="Hara R."/>
            <person name="Takeuchi K."/>
            <person name="Arita M."/>
            <person name="Imose N."/>
            <person name="Musashino K."/>
            <person name="Yuuki H."/>
            <person name="Oshima A."/>
            <person name="Sasaki N."/>
            <person name="Aotsuka S."/>
            <person name="Yoshikawa Y."/>
            <person name="Matsunawa H."/>
            <person name="Ichihara T."/>
            <person name="Shiohata N."/>
            <person name="Sano S."/>
            <person name="Moriya S."/>
            <person name="Momiyama H."/>
            <person name="Satoh N."/>
            <person name="Takami S."/>
            <person name="Terashima Y."/>
            <person name="Suzuki O."/>
            <person name="Nakagawa S."/>
            <person name="Senoh A."/>
            <person name="Mizoguchi H."/>
            <person name="Goto Y."/>
            <person name="Shimizu F."/>
            <person name="Wakebe H."/>
            <person name="Hishigaki H."/>
            <person name="Watanabe T."/>
            <person name="Sugiyama A."/>
            <person name="Takemoto M."/>
            <person name="Kawakami B."/>
            <person name="Yamazaki M."/>
            <person name="Watanabe K."/>
            <person name="Kumagai A."/>
            <person name="Itakura S."/>
            <person name="Fukuzumi Y."/>
            <person name="Fujimori Y."/>
            <person name="Komiyama M."/>
            <person name="Tashiro H."/>
            <person name="Tanigami A."/>
            <person name="Fujiwara T."/>
            <person name="Ono T."/>
            <person name="Yamada K."/>
            <person name="Fujii Y."/>
            <person name="Ozaki K."/>
            <person name="Hirao M."/>
            <person name="Ohmori Y."/>
            <person name="Kawabata A."/>
            <person name="Hikiji T."/>
            <person name="Kobatake N."/>
            <person name="Inagaki H."/>
            <person name="Ikema Y."/>
            <person name="Okamoto S."/>
            <person name="Okitani R."/>
            <person name="Kawakami T."/>
            <person name="Noguchi S."/>
            <person name="Itoh T."/>
            <person name="Shigeta K."/>
            <person name="Senba T."/>
            <person name="Matsumura K."/>
            <person name="Nakajima Y."/>
            <person name="Mizuno T."/>
            <person name="Morinaga M."/>
            <person name="Sasaki M."/>
            <person name="Togashi T."/>
            <person name="Oyama M."/>
            <person name="Hata H."/>
            <person name="Watanabe M."/>
            <person name="Komatsu T."/>
            <person name="Mizushima-Sugano J."/>
            <person name="Satoh T."/>
            <person name="Shirai Y."/>
            <person name="Takahashi Y."/>
            <person name="Nakagawa K."/>
            <person name="Okumura K."/>
            <person name="Nagase T."/>
            <person name="Nomura N."/>
            <person name="Kikuchi H."/>
            <person name="Masuho Y."/>
            <person name="Yamashita R."/>
            <person name="Nakai K."/>
            <person name="Yada T."/>
            <person name="Nakamura Y."/>
            <person name="Ohara O."/>
            <person name="Isogai T."/>
            <person name="Sugano S."/>
        </authorList>
    </citation>
    <scope>NUCLEOTIDE SEQUENCE [LARGE SCALE MRNA] OF 56-1088 (ISOFORM 1)</scope>
    <source>
        <tissue>Thyroid</tissue>
    </source>
</reference>
<organism>
    <name type="scientific">Homo sapiens</name>
    <name type="common">Human</name>
    <dbReference type="NCBI Taxonomy" id="9606"/>
    <lineage>
        <taxon>Eukaryota</taxon>
        <taxon>Metazoa</taxon>
        <taxon>Chordata</taxon>
        <taxon>Craniata</taxon>
        <taxon>Vertebrata</taxon>
        <taxon>Euteleostomi</taxon>
        <taxon>Mammalia</taxon>
        <taxon>Eutheria</taxon>
        <taxon>Euarchontoglires</taxon>
        <taxon>Primates</taxon>
        <taxon>Haplorrhini</taxon>
        <taxon>Catarrhini</taxon>
        <taxon>Hominidae</taxon>
        <taxon>Homo</taxon>
    </lineage>
</organism>
<sequence length="1088" mass="124375">MALHFQSLAELEVLCTHLYIGTDLTQRIEAEKALLELIDSPECLSKCQLLLEQGTTSYAQLLAATCLSKLVSRVSPLPVEQRMDIRNYILNYVASQPKLAPFVIQALIQVIAKITKLGWFEVQKDQFVFREIIADVKKFLQGTVEHCIIGVIILSELTQEMNLVDYSRPSAKHRKIATSFRDTSLKDVLVLACSLLKEVFAKPLNLQDQCQQNLVMQVLKLVLNCLNFDFIGSSADESADDLCTVQIPTTWRTIFLEPETLDLFFNLYHSLPPLLSQLALSCLVQFASTRRSLFNSPERAKYLGNLIKGVKRILENPQGLSDPGNYHEFCRFLARLKTNYQLGELVMVKEYPEVIRLIANFTITSLQHWEFAPNSVHYLLTLWQRMVASVPFVKSTEPHLLDTYAPEITKAFITSRLDSVAIVVRDHLDDPLDDTATVFQQLEQLCTVSRCEYEKTCALLVQLFDQNAQNYQKLLHPYSGVTVDITIQEGRLAWLVYLVGTVVGGRLTYTSTDEHDAMDGELSCRVFQLISLMDTGLPRCCNEKIELAILWFLDQFRKTYVGDQLQRTSKVYARMSEVLGITDDNHVLETFMTKIVTNLKYWGRYEPVISRTLQFLNDLSVGYILLKKLVKIDAVKFMLKNHTSEHFPFLGISDNHSLSDFRCRTTFYTALTRLLMVDLGEDEDEFENFMLPLTVAFETVLQIFNNNFKQEDVKRMLIGLARDLRGIAFALNTKTSYTMLFDWMYPTYLPLLQNAVERWYGEPTCTTPILKLMAELMQNRSQRLNFDVSSPNGILLFREASKMVCTYGNQILSLGSLSKDQIYPMKLKGISICYSALKSALCGNYVSFGVFKLYGDNHFDNVLQAFVKMLLSVSHSDLLQYRKLSQSYYPLLECLTQDHMSFIINLEPPVLMYVLTSISEGLTTLDTVVSSSCCTSLDYIVTYLFKHIAKEGKKPLRCREATQAGQRLLHFMQQNPDVLQQMMSVLMNTIVFEDCRNQWSVSRPLLGLILLNEKYFSELRASLINSQPLPKQEVLAQCFRNLMEGVEQNLSVKNRDRFTQNLSVFRRDVAEALRSDGNTEPCSLDMMS</sequence>
<accession>Q9H2T7</accession>
<accession>Q8IU74</accession>
<comment type="function">
    <text evidence="1">May function as a nuclear transport receptor.</text>
</comment>
<comment type="subunit">
    <text evidence="1">Binds to nucleoporins and the GTP-bound form of Ran.</text>
</comment>
<comment type="subcellular location">
    <subcellularLocation>
        <location evidence="1">Cytoplasm</location>
    </subcellularLocation>
    <subcellularLocation>
        <location evidence="1">Nucleus</location>
    </subcellularLocation>
    <subcellularLocation>
        <location evidence="1">Nucleus</location>
        <location evidence="1">Nuclear pore complex</location>
    </subcellularLocation>
</comment>
<comment type="alternative products">
    <event type="alternative splicing"/>
    <isoform>
        <id>Q9H2T7-1</id>
        <name>1</name>
        <sequence type="displayed"/>
    </isoform>
    <isoform>
        <id>Q9H2T7-2</id>
        <name>2</name>
        <sequence type="described" ref="VSP_056669 VSP_056670"/>
    </isoform>
</comment>
<comment type="tissue specificity">
    <text evidence="3">Highly expressed in testis, moderately in pancreas and weakly in other tissues studied.</text>
</comment>
<comment type="similarity">
    <text evidence="5">Belongs to the exportin family.</text>
</comment>
<comment type="sequence caution" evidence="5">
    <conflict type="erroneous initiation">
        <sequence resource="EMBL-CDS" id="BAB55427"/>
    </conflict>
</comment>
<keyword id="KW-0007">Acetylation</keyword>
<keyword id="KW-0025">Alternative splicing</keyword>
<keyword id="KW-0963">Cytoplasm</keyword>
<keyword id="KW-0509">mRNA transport</keyword>
<keyword id="KW-0906">Nuclear pore complex</keyword>
<keyword id="KW-0539">Nucleus</keyword>
<keyword id="KW-0597">Phosphoprotein</keyword>
<keyword id="KW-0653">Protein transport</keyword>
<keyword id="KW-1267">Proteomics identification</keyword>
<keyword id="KW-1185">Reference proteome</keyword>
<keyword id="KW-0811">Translocation</keyword>
<keyword id="KW-0813">Transport</keyword>